<sequence length="450" mass="48330">MTRRYFGTDGIRGQSNVFPMTPDLAMKVGIAVGTILRRGHHRHRVVIGKDTRLSGYMLETALVAGFTAAGLDVFLLGPIPTPAVAMLTRSLRADIGVMVSASHNPFADNGIKLFGPDGYKLSDELEAEIEALLNQEAPLPLARAEDIGRAKRVDGDIYRYIEFVKRTLPRDVTLSGLRIAIDCANGAAYKVAPTALWELGAEVVTIGNEPNGLNINLECGSTHPAALQKKVHEVRADIGIALDGDADRVIIVDETGAIVDGDQLMAVIAESWANDQTLKGGGIVATVMSNLGLERFLGGKGLTLARTKVGDRHVVEHMRQNHYNIGGEQSGHIVLSDFGTTGDGLVAALQILAAVKRTGKTVSQICHRFDPVPQLLRNVRISGGKPLEDSFVRQAIADAESELARNGRLVIRPSGTEPLIRVMAEGDDRSQIERIVNDLIGVIANSREAA</sequence>
<proteinExistence type="inferred from homology"/>
<dbReference type="EC" id="5.4.2.10" evidence="1"/>
<dbReference type="EMBL" id="CP000633">
    <property type="protein sequence ID" value="ACM37613.1"/>
    <property type="molecule type" value="Genomic_DNA"/>
</dbReference>
<dbReference type="RefSeq" id="WP_015917026.1">
    <property type="nucleotide sequence ID" value="NC_011989.1"/>
</dbReference>
<dbReference type="SMR" id="B9JRY5"/>
<dbReference type="STRING" id="311402.Avi_3629"/>
<dbReference type="KEGG" id="avi:Avi_3629"/>
<dbReference type="eggNOG" id="COG1109">
    <property type="taxonomic scope" value="Bacteria"/>
</dbReference>
<dbReference type="HOGENOM" id="CLU_016950_7_0_5"/>
<dbReference type="Proteomes" id="UP000001596">
    <property type="component" value="Chromosome 1"/>
</dbReference>
<dbReference type="GO" id="GO:0005829">
    <property type="term" value="C:cytosol"/>
    <property type="evidence" value="ECO:0007669"/>
    <property type="project" value="TreeGrafter"/>
</dbReference>
<dbReference type="GO" id="GO:0000287">
    <property type="term" value="F:magnesium ion binding"/>
    <property type="evidence" value="ECO:0007669"/>
    <property type="project" value="UniProtKB-UniRule"/>
</dbReference>
<dbReference type="GO" id="GO:0008966">
    <property type="term" value="F:phosphoglucosamine mutase activity"/>
    <property type="evidence" value="ECO:0007669"/>
    <property type="project" value="UniProtKB-UniRule"/>
</dbReference>
<dbReference type="GO" id="GO:0004615">
    <property type="term" value="F:phosphomannomutase activity"/>
    <property type="evidence" value="ECO:0007669"/>
    <property type="project" value="TreeGrafter"/>
</dbReference>
<dbReference type="GO" id="GO:0005975">
    <property type="term" value="P:carbohydrate metabolic process"/>
    <property type="evidence" value="ECO:0007669"/>
    <property type="project" value="InterPro"/>
</dbReference>
<dbReference type="GO" id="GO:0009252">
    <property type="term" value="P:peptidoglycan biosynthetic process"/>
    <property type="evidence" value="ECO:0007669"/>
    <property type="project" value="TreeGrafter"/>
</dbReference>
<dbReference type="GO" id="GO:0006048">
    <property type="term" value="P:UDP-N-acetylglucosamine biosynthetic process"/>
    <property type="evidence" value="ECO:0007669"/>
    <property type="project" value="TreeGrafter"/>
</dbReference>
<dbReference type="CDD" id="cd05802">
    <property type="entry name" value="GlmM"/>
    <property type="match status" value="1"/>
</dbReference>
<dbReference type="FunFam" id="3.30.310.50:FF:000001">
    <property type="entry name" value="Phosphoglucosamine mutase"/>
    <property type="match status" value="1"/>
</dbReference>
<dbReference type="FunFam" id="3.40.120.10:FF:000001">
    <property type="entry name" value="Phosphoglucosamine mutase"/>
    <property type="match status" value="1"/>
</dbReference>
<dbReference type="FunFam" id="3.40.120.10:FF:000003">
    <property type="entry name" value="Phosphoglucosamine mutase"/>
    <property type="match status" value="1"/>
</dbReference>
<dbReference type="Gene3D" id="3.40.120.10">
    <property type="entry name" value="Alpha-D-Glucose-1,6-Bisphosphate, subunit A, domain 3"/>
    <property type="match status" value="3"/>
</dbReference>
<dbReference type="Gene3D" id="3.30.310.50">
    <property type="entry name" value="Alpha-D-phosphohexomutase, C-terminal domain"/>
    <property type="match status" value="1"/>
</dbReference>
<dbReference type="HAMAP" id="MF_01554_B">
    <property type="entry name" value="GlmM_B"/>
    <property type="match status" value="1"/>
</dbReference>
<dbReference type="InterPro" id="IPR005844">
    <property type="entry name" value="A-D-PHexomutase_a/b/a-I"/>
</dbReference>
<dbReference type="InterPro" id="IPR016055">
    <property type="entry name" value="A-D-PHexomutase_a/b/a-I/II/III"/>
</dbReference>
<dbReference type="InterPro" id="IPR005845">
    <property type="entry name" value="A-D-PHexomutase_a/b/a-II"/>
</dbReference>
<dbReference type="InterPro" id="IPR005846">
    <property type="entry name" value="A-D-PHexomutase_a/b/a-III"/>
</dbReference>
<dbReference type="InterPro" id="IPR005843">
    <property type="entry name" value="A-D-PHexomutase_C"/>
</dbReference>
<dbReference type="InterPro" id="IPR036900">
    <property type="entry name" value="A-D-PHexomutase_C_sf"/>
</dbReference>
<dbReference type="InterPro" id="IPR016066">
    <property type="entry name" value="A-D-PHexomutase_CS"/>
</dbReference>
<dbReference type="InterPro" id="IPR005841">
    <property type="entry name" value="Alpha-D-phosphohexomutase_SF"/>
</dbReference>
<dbReference type="InterPro" id="IPR006352">
    <property type="entry name" value="GlmM_bact"/>
</dbReference>
<dbReference type="InterPro" id="IPR050060">
    <property type="entry name" value="Phosphoglucosamine_mutase"/>
</dbReference>
<dbReference type="NCBIfam" id="TIGR01455">
    <property type="entry name" value="glmM"/>
    <property type="match status" value="1"/>
</dbReference>
<dbReference type="NCBIfam" id="NF008139">
    <property type="entry name" value="PRK10887.1"/>
    <property type="match status" value="1"/>
</dbReference>
<dbReference type="PANTHER" id="PTHR42946:SF1">
    <property type="entry name" value="PHOSPHOGLUCOMUTASE (ALPHA-D-GLUCOSE-1,6-BISPHOSPHATE-DEPENDENT)"/>
    <property type="match status" value="1"/>
</dbReference>
<dbReference type="PANTHER" id="PTHR42946">
    <property type="entry name" value="PHOSPHOHEXOSE MUTASE"/>
    <property type="match status" value="1"/>
</dbReference>
<dbReference type="Pfam" id="PF02878">
    <property type="entry name" value="PGM_PMM_I"/>
    <property type="match status" value="1"/>
</dbReference>
<dbReference type="Pfam" id="PF02879">
    <property type="entry name" value="PGM_PMM_II"/>
    <property type="match status" value="1"/>
</dbReference>
<dbReference type="Pfam" id="PF02880">
    <property type="entry name" value="PGM_PMM_III"/>
    <property type="match status" value="1"/>
</dbReference>
<dbReference type="Pfam" id="PF00408">
    <property type="entry name" value="PGM_PMM_IV"/>
    <property type="match status" value="1"/>
</dbReference>
<dbReference type="PRINTS" id="PR00509">
    <property type="entry name" value="PGMPMM"/>
</dbReference>
<dbReference type="SUPFAM" id="SSF55957">
    <property type="entry name" value="Phosphoglucomutase, C-terminal domain"/>
    <property type="match status" value="1"/>
</dbReference>
<dbReference type="SUPFAM" id="SSF53738">
    <property type="entry name" value="Phosphoglucomutase, first 3 domains"/>
    <property type="match status" value="3"/>
</dbReference>
<dbReference type="PROSITE" id="PS00710">
    <property type="entry name" value="PGM_PMM"/>
    <property type="match status" value="1"/>
</dbReference>
<gene>
    <name evidence="1" type="primary">glmM</name>
    <name type="ordered locus">Avi_3629</name>
</gene>
<evidence type="ECO:0000255" key="1">
    <source>
        <dbReference type="HAMAP-Rule" id="MF_01554"/>
    </source>
</evidence>
<comment type="function">
    <text evidence="1">Catalyzes the conversion of glucosamine-6-phosphate to glucosamine-1-phosphate.</text>
</comment>
<comment type="catalytic activity">
    <reaction evidence="1">
        <text>alpha-D-glucosamine 1-phosphate = D-glucosamine 6-phosphate</text>
        <dbReference type="Rhea" id="RHEA:23424"/>
        <dbReference type="ChEBI" id="CHEBI:58516"/>
        <dbReference type="ChEBI" id="CHEBI:58725"/>
        <dbReference type="EC" id="5.4.2.10"/>
    </reaction>
</comment>
<comment type="cofactor">
    <cofactor evidence="1">
        <name>Mg(2+)</name>
        <dbReference type="ChEBI" id="CHEBI:18420"/>
    </cofactor>
    <text evidence="1">Binds 1 Mg(2+) ion per subunit.</text>
</comment>
<comment type="PTM">
    <text evidence="1">Activated by phosphorylation.</text>
</comment>
<comment type="similarity">
    <text evidence="1">Belongs to the phosphohexose mutase family.</text>
</comment>
<organism>
    <name type="scientific">Allorhizobium ampelinum (strain ATCC BAA-846 / DSM 112012 / S4)</name>
    <name type="common">Agrobacterium vitis (strain S4)</name>
    <dbReference type="NCBI Taxonomy" id="311402"/>
    <lineage>
        <taxon>Bacteria</taxon>
        <taxon>Pseudomonadati</taxon>
        <taxon>Pseudomonadota</taxon>
        <taxon>Alphaproteobacteria</taxon>
        <taxon>Hyphomicrobiales</taxon>
        <taxon>Rhizobiaceae</taxon>
        <taxon>Rhizobium/Agrobacterium group</taxon>
        <taxon>Allorhizobium</taxon>
        <taxon>Allorhizobium ampelinum</taxon>
    </lineage>
</organism>
<reference key="1">
    <citation type="journal article" date="2009" name="J. Bacteriol.">
        <title>Genome sequences of three Agrobacterium biovars help elucidate the evolution of multichromosome genomes in bacteria.</title>
        <authorList>
            <person name="Slater S.C."/>
            <person name="Goldman B.S."/>
            <person name="Goodner B."/>
            <person name="Setubal J.C."/>
            <person name="Farrand S.K."/>
            <person name="Nester E.W."/>
            <person name="Burr T.J."/>
            <person name="Banta L."/>
            <person name="Dickerman A.W."/>
            <person name="Paulsen I."/>
            <person name="Otten L."/>
            <person name="Suen G."/>
            <person name="Welch R."/>
            <person name="Almeida N.F."/>
            <person name="Arnold F."/>
            <person name="Burton O.T."/>
            <person name="Du Z."/>
            <person name="Ewing A."/>
            <person name="Godsy E."/>
            <person name="Heisel S."/>
            <person name="Houmiel K.L."/>
            <person name="Jhaveri J."/>
            <person name="Lu J."/>
            <person name="Miller N.M."/>
            <person name="Norton S."/>
            <person name="Chen Q."/>
            <person name="Phoolcharoen W."/>
            <person name="Ohlin V."/>
            <person name="Ondrusek D."/>
            <person name="Pride N."/>
            <person name="Stricklin S.L."/>
            <person name="Sun J."/>
            <person name="Wheeler C."/>
            <person name="Wilson L."/>
            <person name="Zhu H."/>
            <person name="Wood D.W."/>
        </authorList>
    </citation>
    <scope>NUCLEOTIDE SEQUENCE [LARGE SCALE GENOMIC DNA]</scope>
    <source>
        <strain>ATCC BAA-846 / DSM 112012 / S4</strain>
    </source>
</reference>
<keyword id="KW-0413">Isomerase</keyword>
<keyword id="KW-0460">Magnesium</keyword>
<keyword id="KW-0479">Metal-binding</keyword>
<keyword id="KW-0597">Phosphoprotein</keyword>
<keyword id="KW-1185">Reference proteome</keyword>
<name>GLMM_ALLAM</name>
<accession>B9JRY5</accession>
<feature type="chain" id="PRO_1000185344" description="Phosphoglucosamine mutase">
    <location>
        <begin position="1"/>
        <end position="450"/>
    </location>
</feature>
<feature type="active site" description="Phosphoserine intermediate" evidence="1">
    <location>
        <position position="102"/>
    </location>
</feature>
<feature type="binding site" description="via phosphate group" evidence="1">
    <location>
        <position position="102"/>
    </location>
    <ligand>
        <name>Mg(2+)</name>
        <dbReference type="ChEBI" id="CHEBI:18420"/>
    </ligand>
</feature>
<feature type="binding site" evidence="1">
    <location>
        <position position="243"/>
    </location>
    <ligand>
        <name>Mg(2+)</name>
        <dbReference type="ChEBI" id="CHEBI:18420"/>
    </ligand>
</feature>
<feature type="binding site" evidence="1">
    <location>
        <position position="245"/>
    </location>
    <ligand>
        <name>Mg(2+)</name>
        <dbReference type="ChEBI" id="CHEBI:18420"/>
    </ligand>
</feature>
<feature type="binding site" evidence="1">
    <location>
        <position position="247"/>
    </location>
    <ligand>
        <name>Mg(2+)</name>
        <dbReference type="ChEBI" id="CHEBI:18420"/>
    </ligand>
</feature>
<feature type="modified residue" description="Phosphoserine" evidence="1">
    <location>
        <position position="102"/>
    </location>
</feature>
<protein>
    <recommendedName>
        <fullName evidence="1">Phosphoglucosamine mutase</fullName>
        <ecNumber evidence="1">5.4.2.10</ecNumber>
    </recommendedName>
</protein>